<evidence type="ECO:0000255" key="1">
    <source>
        <dbReference type="HAMAP-Rule" id="MF_01302"/>
    </source>
</evidence>
<evidence type="ECO:0000305" key="2"/>
<dbReference type="EMBL" id="AE015451">
    <property type="protein sequence ID" value="AAN66098.1"/>
    <property type="molecule type" value="Genomic_DNA"/>
</dbReference>
<dbReference type="RefSeq" id="NP_742634.1">
    <property type="nucleotide sequence ID" value="NC_002947.4"/>
</dbReference>
<dbReference type="RefSeq" id="WP_003255471.1">
    <property type="nucleotide sequence ID" value="NZ_CP169744.1"/>
</dbReference>
<dbReference type="SMR" id="Q88QM1"/>
<dbReference type="STRING" id="160488.PP_0468"/>
<dbReference type="PaxDb" id="160488-PP_0468"/>
<dbReference type="GeneID" id="83677766"/>
<dbReference type="KEGG" id="ppu:PP_0468"/>
<dbReference type="PATRIC" id="fig|160488.4.peg.500"/>
<dbReference type="eggNOG" id="COG0096">
    <property type="taxonomic scope" value="Bacteria"/>
</dbReference>
<dbReference type="HOGENOM" id="CLU_098428_0_0_6"/>
<dbReference type="OrthoDB" id="9802617at2"/>
<dbReference type="PhylomeDB" id="Q88QM1"/>
<dbReference type="BioCyc" id="PPUT160488:G1G01-514-MONOMER"/>
<dbReference type="Proteomes" id="UP000000556">
    <property type="component" value="Chromosome"/>
</dbReference>
<dbReference type="GO" id="GO:1990904">
    <property type="term" value="C:ribonucleoprotein complex"/>
    <property type="evidence" value="ECO:0007669"/>
    <property type="project" value="UniProtKB-KW"/>
</dbReference>
<dbReference type="GO" id="GO:0005840">
    <property type="term" value="C:ribosome"/>
    <property type="evidence" value="ECO:0007669"/>
    <property type="project" value="UniProtKB-KW"/>
</dbReference>
<dbReference type="GO" id="GO:0019843">
    <property type="term" value="F:rRNA binding"/>
    <property type="evidence" value="ECO:0007669"/>
    <property type="project" value="UniProtKB-UniRule"/>
</dbReference>
<dbReference type="GO" id="GO:0003735">
    <property type="term" value="F:structural constituent of ribosome"/>
    <property type="evidence" value="ECO:0007669"/>
    <property type="project" value="InterPro"/>
</dbReference>
<dbReference type="GO" id="GO:0006412">
    <property type="term" value="P:translation"/>
    <property type="evidence" value="ECO:0007669"/>
    <property type="project" value="UniProtKB-UniRule"/>
</dbReference>
<dbReference type="FunFam" id="3.30.1370.30:FF:000003">
    <property type="entry name" value="30S ribosomal protein S8"/>
    <property type="match status" value="1"/>
</dbReference>
<dbReference type="FunFam" id="3.30.1490.10:FF:000001">
    <property type="entry name" value="30S ribosomal protein S8"/>
    <property type="match status" value="1"/>
</dbReference>
<dbReference type="Gene3D" id="3.30.1370.30">
    <property type="match status" value="1"/>
</dbReference>
<dbReference type="Gene3D" id="3.30.1490.10">
    <property type="match status" value="1"/>
</dbReference>
<dbReference type="HAMAP" id="MF_01302_B">
    <property type="entry name" value="Ribosomal_uS8_B"/>
    <property type="match status" value="1"/>
</dbReference>
<dbReference type="InterPro" id="IPR000630">
    <property type="entry name" value="Ribosomal_uS8"/>
</dbReference>
<dbReference type="InterPro" id="IPR047863">
    <property type="entry name" value="Ribosomal_uS8_CS"/>
</dbReference>
<dbReference type="InterPro" id="IPR035987">
    <property type="entry name" value="Ribosomal_uS8_sf"/>
</dbReference>
<dbReference type="NCBIfam" id="NF001109">
    <property type="entry name" value="PRK00136.1"/>
    <property type="match status" value="1"/>
</dbReference>
<dbReference type="PANTHER" id="PTHR11758">
    <property type="entry name" value="40S RIBOSOMAL PROTEIN S15A"/>
    <property type="match status" value="1"/>
</dbReference>
<dbReference type="Pfam" id="PF00410">
    <property type="entry name" value="Ribosomal_S8"/>
    <property type="match status" value="1"/>
</dbReference>
<dbReference type="SUPFAM" id="SSF56047">
    <property type="entry name" value="Ribosomal protein S8"/>
    <property type="match status" value="1"/>
</dbReference>
<dbReference type="PROSITE" id="PS00053">
    <property type="entry name" value="RIBOSOMAL_S8"/>
    <property type="match status" value="1"/>
</dbReference>
<name>RS8_PSEPK</name>
<keyword id="KW-1185">Reference proteome</keyword>
<keyword id="KW-0687">Ribonucleoprotein</keyword>
<keyword id="KW-0689">Ribosomal protein</keyword>
<keyword id="KW-0694">RNA-binding</keyword>
<keyword id="KW-0699">rRNA-binding</keyword>
<accession>Q88QM1</accession>
<feature type="chain" id="PRO_0000126467" description="Small ribosomal subunit protein uS8">
    <location>
        <begin position="1"/>
        <end position="130"/>
    </location>
</feature>
<protein>
    <recommendedName>
        <fullName evidence="1">Small ribosomal subunit protein uS8</fullName>
    </recommendedName>
    <alternativeName>
        <fullName evidence="2">30S ribosomal protein S8</fullName>
    </alternativeName>
</protein>
<comment type="function">
    <text evidence="1">One of the primary rRNA binding proteins, it binds directly to 16S rRNA central domain where it helps coordinate assembly of the platform of the 30S subunit.</text>
</comment>
<comment type="subunit">
    <text evidence="1">Part of the 30S ribosomal subunit. Contacts proteins S5 and S12.</text>
</comment>
<comment type="similarity">
    <text evidence="1">Belongs to the universal ribosomal protein uS8 family.</text>
</comment>
<proteinExistence type="inferred from homology"/>
<reference key="1">
    <citation type="journal article" date="2002" name="Environ. Microbiol.">
        <title>Complete genome sequence and comparative analysis of the metabolically versatile Pseudomonas putida KT2440.</title>
        <authorList>
            <person name="Nelson K.E."/>
            <person name="Weinel C."/>
            <person name="Paulsen I.T."/>
            <person name="Dodson R.J."/>
            <person name="Hilbert H."/>
            <person name="Martins dos Santos V.A.P."/>
            <person name="Fouts D.E."/>
            <person name="Gill S.R."/>
            <person name="Pop M."/>
            <person name="Holmes M."/>
            <person name="Brinkac L.M."/>
            <person name="Beanan M.J."/>
            <person name="DeBoy R.T."/>
            <person name="Daugherty S.C."/>
            <person name="Kolonay J.F."/>
            <person name="Madupu R."/>
            <person name="Nelson W.C."/>
            <person name="White O."/>
            <person name="Peterson J.D."/>
            <person name="Khouri H.M."/>
            <person name="Hance I."/>
            <person name="Chris Lee P."/>
            <person name="Holtzapple E.K."/>
            <person name="Scanlan D."/>
            <person name="Tran K."/>
            <person name="Moazzez A."/>
            <person name="Utterback T.R."/>
            <person name="Rizzo M."/>
            <person name="Lee K."/>
            <person name="Kosack D."/>
            <person name="Moestl D."/>
            <person name="Wedler H."/>
            <person name="Lauber J."/>
            <person name="Stjepandic D."/>
            <person name="Hoheisel J."/>
            <person name="Straetz M."/>
            <person name="Heim S."/>
            <person name="Kiewitz C."/>
            <person name="Eisen J.A."/>
            <person name="Timmis K.N."/>
            <person name="Duesterhoeft A."/>
            <person name="Tuemmler B."/>
            <person name="Fraser C.M."/>
        </authorList>
    </citation>
    <scope>NUCLEOTIDE SEQUENCE [LARGE SCALE GENOMIC DNA]</scope>
    <source>
        <strain>ATCC 47054 / DSM 6125 / CFBP 8728 / NCIMB 11950 / KT2440</strain>
    </source>
</reference>
<organism>
    <name type="scientific">Pseudomonas putida (strain ATCC 47054 / DSM 6125 / CFBP 8728 / NCIMB 11950 / KT2440)</name>
    <dbReference type="NCBI Taxonomy" id="160488"/>
    <lineage>
        <taxon>Bacteria</taxon>
        <taxon>Pseudomonadati</taxon>
        <taxon>Pseudomonadota</taxon>
        <taxon>Gammaproteobacteria</taxon>
        <taxon>Pseudomonadales</taxon>
        <taxon>Pseudomonadaceae</taxon>
        <taxon>Pseudomonas</taxon>
    </lineage>
</organism>
<sequence>MSMQDPLADMLTRIRNAQMAEKSVVSMPSSTLKVAVAKVLKDEGYIAGYQVTGEAKPSLSIELKYFEGRPVIEELKRSSRPGLRQYKAVTDLPKVRGGLGVSIVSTNKGVMTDRAARAAGVGGEVLCTVF</sequence>
<gene>
    <name evidence="1" type="primary">rpsH</name>
    <name type="ordered locus">PP_0468</name>
</gene>